<sequence>MKYNPRVSSNRRKS</sequence>
<protein>
    <recommendedName>
        <fullName evidence="4">Large ribosomal subunit protein uL24</fullName>
    </recommendedName>
    <alternativeName>
        <fullName>60S ribosomal protein L26</fullName>
    </alternativeName>
</protein>
<reference evidence="4" key="1">
    <citation type="submission" date="2000-04" db="UniProtKB">
        <title>N-terminal sequence of spinach cytosolic 60S ribosomal protein L26.</title>
        <authorList>
            <person name="Yamaguchi K."/>
            <person name="Subramanian A.R."/>
        </authorList>
    </citation>
    <scope>PROTEIN SEQUENCE</scope>
    <source>
        <strain evidence="2">cv. Alwaro</strain>
        <tissue evidence="2">Leaf</tissue>
    </source>
</reference>
<gene>
    <name type="primary">RPL26</name>
</gene>
<comment type="similarity">
    <text evidence="1">Belongs to the universal ribosomal protein uL24 family.</text>
</comment>
<evidence type="ECO:0000255" key="1"/>
<evidence type="ECO:0000269" key="2">
    <source ref="1"/>
</evidence>
<evidence type="ECO:0000303" key="3">
    <source ref="1"/>
</evidence>
<evidence type="ECO:0000305" key="4"/>
<keyword id="KW-0903">Direct protein sequencing</keyword>
<keyword id="KW-1185">Reference proteome</keyword>
<keyword id="KW-0687">Ribonucleoprotein</keyword>
<keyword id="KW-0689">Ribosomal protein</keyword>
<proteinExistence type="evidence at protein level"/>
<accession>P82452</accession>
<dbReference type="Proteomes" id="UP001155700">
    <property type="component" value="Unplaced"/>
</dbReference>
<dbReference type="GO" id="GO:1990904">
    <property type="term" value="C:ribonucleoprotein complex"/>
    <property type="evidence" value="ECO:0007669"/>
    <property type="project" value="UniProtKB-KW"/>
</dbReference>
<dbReference type="GO" id="GO:0005840">
    <property type="term" value="C:ribosome"/>
    <property type="evidence" value="ECO:0007669"/>
    <property type="project" value="UniProtKB-KW"/>
</dbReference>
<feature type="chain" id="PRO_0000259411" description="Large ribosomal subunit protein uL24">
    <location>
        <begin position="1"/>
        <end position="14" status="greater than"/>
    </location>
</feature>
<feature type="non-terminal residue" evidence="3">
    <location>
        <position position="14"/>
    </location>
</feature>
<name>RL26_SPIOL</name>
<organism>
    <name type="scientific">Spinacia oleracea</name>
    <name type="common">Spinach</name>
    <dbReference type="NCBI Taxonomy" id="3562"/>
    <lineage>
        <taxon>Eukaryota</taxon>
        <taxon>Viridiplantae</taxon>
        <taxon>Streptophyta</taxon>
        <taxon>Embryophyta</taxon>
        <taxon>Tracheophyta</taxon>
        <taxon>Spermatophyta</taxon>
        <taxon>Magnoliopsida</taxon>
        <taxon>eudicotyledons</taxon>
        <taxon>Gunneridae</taxon>
        <taxon>Pentapetalae</taxon>
        <taxon>Caryophyllales</taxon>
        <taxon>Chenopodiaceae</taxon>
        <taxon>Chenopodioideae</taxon>
        <taxon>Anserineae</taxon>
        <taxon>Spinacia</taxon>
    </lineage>
</organism>